<evidence type="ECO:0000250" key="1">
    <source>
        <dbReference type="UniProtKB" id="O15534"/>
    </source>
</evidence>
<evidence type="ECO:0000250" key="2">
    <source>
        <dbReference type="UniProtKB" id="O54943"/>
    </source>
</evidence>
<evidence type="ECO:0000250" key="3">
    <source>
        <dbReference type="UniProtKB" id="Q8CHI5"/>
    </source>
</evidence>
<evidence type="ECO:0000255" key="4"/>
<evidence type="ECO:0000255" key="5">
    <source>
        <dbReference type="PROSITE-ProRule" id="PRU00140"/>
    </source>
</evidence>
<evidence type="ECO:0000256" key="6">
    <source>
        <dbReference type="SAM" id="MobiDB-lite"/>
    </source>
</evidence>
<evidence type="ECO:0000269" key="7">
    <source>
    </source>
</evidence>
<evidence type="ECO:0000269" key="8">
    <source>
    </source>
</evidence>
<evidence type="ECO:0000269" key="9">
    <source>
    </source>
</evidence>
<evidence type="ECO:0000269" key="10">
    <source>
    </source>
</evidence>
<evidence type="ECO:0000269" key="11">
    <source>
    </source>
</evidence>
<evidence type="ECO:0000269" key="12">
    <source>
    </source>
</evidence>
<evidence type="ECO:0000269" key="13">
    <source>
    </source>
</evidence>
<evidence type="ECO:0000269" key="14">
    <source>
    </source>
</evidence>
<evidence type="ECO:0000269" key="15">
    <source>
    </source>
</evidence>
<evidence type="ECO:0000269" key="16">
    <source>
    </source>
</evidence>
<evidence type="ECO:0000269" key="17">
    <source>
    </source>
</evidence>
<evidence type="ECO:0000269" key="18">
    <source>
    </source>
</evidence>
<evidence type="ECO:0000269" key="19">
    <source>
    </source>
</evidence>
<evidence type="ECO:0000269" key="20">
    <source>
    </source>
</evidence>
<evidence type="ECO:0000269" key="21">
    <source>
    </source>
</evidence>
<evidence type="ECO:0000269" key="22">
    <source>
    </source>
</evidence>
<evidence type="ECO:0000269" key="23">
    <source>
    </source>
</evidence>
<evidence type="ECO:0000269" key="24">
    <source>
    </source>
</evidence>
<evidence type="ECO:0000269" key="25">
    <source>
    </source>
</evidence>
<evidence type="ECO:0000269" key="26">
    <source>
    </source>
</evidence>
<evidence type="ECO:0000269" key="27">
    <source>
    </source>
</evidence>
<evidence type="ECO:0000269" key="28">
    <source>
    </source>
</evidence>
<evidence type="ECO:0000269" key="29">
    <source>
    </source>
</evidence>
<evidence type="ECO:0000269" key="30">
    <source>
    </source>
</evidence>
<evidence type="ECO:0000269" key="31">
    <source>
    </source>
</evidence>
<evidence type="ECO:0000269" key="32">
    <source>
    </source>
</evidence>
<evidence type="ECO:0000269" key="33">
    <source>
    </source>
</evidence>
<evidence type="ECO:0000269" key="34">
    <source>
    </source>
</evidence>
<evidence type="ECO:0000269" key="35">
    <source>
    </source>
</evidence>
<evidence type="ECO:0000305" key="36"/>
<evidence type="ECO:0007744" key="37">
    <source>
    </source>
</evidence>
<evidence type="ECO:0007829" key="38">
    <source>
        <dbReference type="PDB" id="4DJ2"/>
    </source>
</evidence>
<organism>
    <name type="scientific">Mus musculus</name>
    <name type="common">Mouse</name>
    <dbReference type="NCBI Taxonomy" id="10090"/>
    <lineage>
        <taxon>Eukaryota</taxon>
        <taxon>Metazoa</taxon>
        <taxon>Chordata</taxon>
        <taxon>Craniata</taxon>
        <taxon>Vertebrata</taxon>
        <taxon>Euteleostomi</taxon>
        <taxon>Mammalia</taxon>
        <taxon>Eutheria</taxon>
        <taxon>Euarchontoglires</taxon>
        <taxon>Glires</taxon>
        <taxon>Rodentia</taxon>
        <taxon>Myomorpha</taxon>
        <taxon>Muroidea</taxon>
        <taxon>Muridae</taxon>
        <taxon>Murinae</taxon>
        <taxon>Mus</taxon>
        <taxon>Mus</taxon>
    </lineage>
</organism>
<reference key="1">
    <citation type="journal article" date="1997" name="Cell">
        <title>Rigui, a putative mammalian ortholog of the Drosophila period gene.</title>
        <authorList>
            <person name="Sun Z.S."/>
            <person name="Albrecht U."/>
            <person name="Zhuchenko O."/>
            <person name="Bailey J."/>
            <person name="Eichele G."/>
            <person name="Lee C.C."/>
        </authorList>
    </citation>
    <scope>NUCLEOTIDE SEQUENCE [MRNA]</scope>
    <scope>INDUCTION</scope>
    <source>
        <tissue>Brain</tissue>
    </source>
</reference>
<reference key="2">
    <citation type="journal article" date="1997" name="Nature">
        <title>Circadian oscillation of a mammalian homologue of the Drosophila period gene.</title>
        <authorList>
            <person name="Tei H."/>
            <person name="Okamura H."/>
            <person name="Shigeyoshi Y."/>
            <person name="Fukuhara C."/>
            <person name="Ozawa R."/>
            <person name="Hirose M."/>
            <person name="Sakaki Y."/>
        </authorList>
    </citation>
    <scope>NUCLEOTIDE SEQUENCE [MRNA]</scope>
    <scope>TISSUE SPECIFICITY</scope>
    <scope>INDUCTION</scope>
    <source>
        <strain>BALB/cJ</strain>
        <tissue>Brain</tissue>
    </source>
</reference>
<reference key="3">
    <citation type="journal article" date="2000" name="Genomics">
        <title>The human and mouse Period1 genes: five well-conserved E-boxes additively contribute to the enhancement of mPer1 transcription.</title>
        <authorList>
            <person name="Hida A."/>
            <person name="Koike N."/>
            <person name="Hirose M."/>
            <person name="Hattori M."/>
            <person name="Sakaki Y."/>
            <person name="Tei H."/>
        </authorList>
    </citation>
    <scope>NUCLEOTIDE SEQUENCE [GENOMIC DNA]</scope>
</reference>
<reference key="4">
    <citation type="journal article" date="2009" name="PLoS Biol.">
        <title>Lineage-specific biology revealed by a finished genome assembly of the mouse.</title>
        <authorList>
            <person name="Church D.M."/>
            <person name="Goodstadt L."/>
            <person name="Hillier L.W."/>
            <person name="Zody M.C."/>
            <person name="Goldstein S."/>
            <person name="She X."/>
            <person name="Bult C.J."/>
            <person name="Agarwala R."/>
            <person name="Cherry J.L."/>
            <person name="DiCuccio M."/>
            <person name="Hlavina W."/>
            <person name="Kapustin Y."/>
            <person name="Meric P."/>
            <person name="Maglott D."/>
            <person name="Birtle Z."/>
            <person name="Marques A.C."/>
            <person name="Graves T."/>
            <person name="Zhou S."/>
            <person name="Teague B."/>
            <person name="Potamousis K."/>
            <person name="Churas C."/>
            <person name="Place M."/>
            <person name="Herschleb J."/>
            <person name="Runnheim R."/>
            <person name="Forrest D."/>
            <person name="Amos-Landgraf J."/>
            <person name="Schwartz D.C."/>
            <person name="Cheng Z."/>
            <person name="Lindblad-Toh K."/>
            <person name="Eichler E.E."/>
            <person name="Ponting C.P."/>
        </authorList>
    </citation>
    <scope>NUCLEOTIDE SEQUENCE [LARGE SCALE GENOMIC DNA]</scope>
    <source>
        <strain>C57BL/6J</strain>
    </source>
</reference>
<reference key="5">
    <citation type="journal article" date="1997" name="Neuron">
        <title>Two period homologs: circadian expression and photic regulation in the suprachiasmatic nuclei.</title>
        <authorList>
            <person name="Shearman L.P."/>
            <person name="Zylka M.J."/>
            <person name="Weaver D.R."/>
            <person name="Kolakowski L.F. Jr."/>
            <person name="Reppert S.M."/>
        </authorList>
    </citation>
    <scope>TISSUE SPECIFICITY</scope>
    <scope>INDUCTION</scope>
</reference>
<reference key="6">
    <citation type="journal article" date="1998" name="Neuron">
        <title>Mammalian circadian autoregulatory loop: a timeless ortholog and mPer1 interact and negatively regulate CLOCK-ARTNL/BMAL1-induced transcription.</title>
        <authorList>
            <person name="Sangoram A.M."/>
            <person name="Saez L."/>
            <person name="Antoch M.P."/>
            <person name="Gekakis N."/>
            <person name="Staknis D."/>
            <person name="Whiteley A."/>
            <person name="Fruechte E.M."/>
            <person name="Vitaterna M.H."/>
            <person name="Shimomura K."/>
            <person name="King D.P."/>
            <person name="Young M.W."/>
            <person name="Weitz C.J."/>
            <person name="Takahashi J.S."/>
        </authorList>
    </citation>
    <scope>FUNCTION</scope>
    <scope>INTERACTION WITH TIMELESS</scope>
</reference>
<reference key="7">
    <citation type="journal article" date="1999" name="Brain Res. Mol. Brain Res.">
        <title>Circadian regulation of cryptochrome genes in the mouse.</title>
        <authorList>
            <person name="Miyamoto Y."/>
            <person name="Sancar A."/>
        </authorList>
    </citation>
    <scope>TISSUE SPECIFICITY</scope>
    <scope>INDUCTION</scope>
</reference>
<reference key="8">
    <citation type="journal article" date="1999" name="Cell">
        <title>mCRY1 and mCRY2 are essential components of the negative limb of the circadian clock feedback loop.</title>
        <authorList>
            <person name="Kume K."/>
            <person name="Zylka M.J."/>
            <person name="Sriram S."/>
            <person name="Shearman L.P."/>
            <person name="Weaver D.R."/>
            <person name="Jin X."/>
            <person name="Maywood E.S."/>
            <person name="Hastings M.H."/>
            <person name="Reppert S.M."/>
        </authorList>
    </citation>
    <scope>INTERACTION WITH PER3; CRY1 AND CRY2</scope>
    <scope>SUBCELLULAR LOCATION</scope>
</reference>
<reference key="9">
    <citation type="journal article" date="1999" name="Genes Cells">
        <title>A mammalian ortholog of Drosophila timeless, highly expressed in SCN and retina, forms a complex with mPER1.</title>
        <authorList>
            <person name="Takumi T."/>
            <person name="Nagamine Y."/>
            <person name="Miyake S."/>
            <person name="Matsubara C."/>
            <person name="Taguchi K."/>
            <person name="Takekida S."/>
            <person name="Sakakida Y."/>
            <person name="Nishikawa K."/>
            <person name="Kishimoto T."/>
            <person name="Niwa S."/>
            <person name="Okumura K."/>
            <person name="Okamura H."/>
        </authorList>
    </citation>
    <scope>INTERACTION WITH TIMELESS</scope>
    <scope>SUBCELLULAR LOCATION</scope>
</reference>
<reference key="10">
    <citation type="journal article" date="2000" name="Mol. Cell. Biol.">
        <title>Nuclear entry of the circadian regulator mPER1 is controlled by mammalian casein kinase I epsilon.</title>
        <authorList>
            <person name="Vielhaber E."/>
            <person name="Eide E."/>
            <person name="Rivers A."/>
            <person name="Gao Z.-H."/>
            <person name="Virshup D.M."/>
        </authorList>
    </citation>
    <scope>INTERACTION WITH PER2</scope>
    <scope>PHOSPHORYLATION BY CKSN1E</scope>
    <scope>NUCLEAR LOCALIZATION SIGNAL</scope>
    <scope>SUBCELLULAR LOCATION</scope>
    <scope>MUTAGENESIS OF 831-HIS--ARG-833; 835-LYS--ARG-838 AND 902-THR--THR-914</scope>
</reference>
<reference key="11">
    <citation type="journal article" date="2001" name="Cell">
        <title>Posttranslational mechanisms regulate the mammalian circadian clock.</title>
        <authorList>
            <person name="Lee C."/>
            <person name="Etchegaray J.-P."/>
            <person name="Cagampang F.R.A."/>
            <person name="Loudon A.S.I."/>
            <person name="Reppert S.M."/>
        </authorList>
    </citation>
    <scope>IDENTIFICATION IN A COMPLEX WITH CLOCK; PER1; PER2; CRY1; CRY2; CSNK1D AND CSNK1E</scope>
    <scope>PHOSPHORYLATION</scope>
    <scope>SUBCELLULAR LOCATION</scope>
    <scope>INDUCTION</scope>
</reference>
<reference key="12">
    <citation type="journal article" date="2001" name="J. Biol. Chem.">
        <title>Nuclear export of mammalian PERIOD proteins.</title>
        <authorList>
            <person name="Vielhaber E.L."/>
            <person name="Duricka D."/>
            <person name="Ullman K.S."/>
            <person name="Virshup D.M."/>
        </authorList>
    </citation>
    <scope>SUBCELLULAR LOCATION</scope>
    <scope>NUCLEAR EXPORT SIGNAL</scope>
</reference>
<reference key="13">
    <citation type="journal article" date="2001" name="Neuron">
        <title>Differential functions of mPer1, mPer2, and mPer3 in the SCN circadian clock.</title>
        <authorList>
            <person name="Bae K."/>
            <person name="Jin X."/>
            <person name="Maywood E.S."/>
            <person name="Hastings M.H."/>
            <person name="Reppert S.M."/>
            <person name="Weaver D.R."/>
        </authorList>
    </citation>
    <scope>FUNCTION REPRESSOR OF TRANSLATION</scope>
    <scope>DISRUPTION PHENOTYPE</scope>
</reference>
<reference key="14">
    <citation type="journal article" date="2002" name="J. Biol. Chem.">
        <title>The circadian regulatory proteins BMAL1 and cryptochromes are substrates of casein kinase Iepsilon.</title>
        <authorList>
            <person name="Eide E.J."/>
            <person name="Vielhaber E.L."/>
            <person name="Hinz W.A."/>
            <person name="Virshup D.M."/>
        </authorList>
    </citation>
    <scope>INTERACTION WITH CRY1 AND CRY2</scope>
    <scope>SUBCELLULAR LOCATION</scope>
</reference>
<reference key="15">
    <citation type="journal article" date="2002" name="Mol. Cell. Biol.">
        <title>Control of intracellular dynamics of mammalian period proteins by casein kinase I epsilon (CKIepsilon) and CKIdelta in cultured cells.</title>
        <authorList>
            <person name="Akashi M."/>
            <person name="Tsuchiya Y."/>
            <person name="Yoshino T."/>
            <person name="Nishida E."/>
        </authorList>
    </citation>
    <scope>PHOSPHORYLATION BY CSNK1D AND CKSN1E</scope>
    <scope>UBIQUITINATION</scope>
</reference>
<reference key="16">
    <citation type="journal article" date="2004" name="Biochem. Biophys. Res. Commun.">
        <title>A novel autofeedback loop of Dec1 transcription involved in circadian rhythm regulation.</title>
        <authorList>
            <person name="Kawamoto T."/>
            <person name="Noshiro M."/>
            <person name="Sato F."/>
            <person name="Maemura K."/>
            <person name="Takeda N."/>
            <person name="Nagai R."/>
            <person name="Iwata T."/>
            <person name="Fujimoto K."/>
            <person name="Furukawa M."/>
            <person name="Miyazaki K."/>
            <person name="Honma S."/>
            <person name="Honma K.I."/>
            <person name="Kato Y."/>
        </authorList>
    </citation>
    <scope>FUNCTION</scope>
</reference>
<reference key="17">
    <citation type="journal article" date="2004" name="J. Biol. Chem.">
        <title>Identification of mPer1 phosphorylation sites responsible for the nuclear entry.</title>
        <authorList>
            <person name="Takano A."/>
            <person name="Isojima Y."/>
            <person name="Nagai K."/>
        </authorList>
    </citation>
    <scope>PHOSPHORYLATION AT SER-661 AND SER-663</scope>
    <scope>SUBCELLULAR LOCATION</scope>
    <scope>MUTAGENESIS OF 661-SER--SER-663</scope>
</reference>
<reference key="18">
    <citation type="journal article" date="2004" name="Mol. Cell. Biol.">
        <title>Direct association between mouse PERIOD and CKIepsilon is critical for a functioning circadian clock.</title>
        <authorList>
            <person name="Lee C."/>
            <person name="Weaver D.R."/>
            <person name="Reppert S.M."/>
        </authorList>
    </citation>
    <scope>INTERACTION WITH PER2; PER3; CRY1 AND CRY2</scope>
    <scope>PHOSPHORYLATION BY CSNK1E</scope>
</reference>
<reference key="19">
    <citation type="journal article" date="2005" name="J. Neurosci.">
        <title>Mouse Period1 (mPER1) acts as a circadian adaptor to entrain the oscillator to environmental light/dark cycles by regulating mPER2 protein.</title>
        <authorList>
            <person name="Masubuchi S."/>
            <person name="Kataoka N."/>
            <person name="Sassone-Corsi P."/>
            <person name="Okamura H."/>
        </authorList>
    </citation>
    <scope>FUNCTION AS PER2 REGULATOR</scope>
    <scope>DISRUPTION PHENOTYPE</scope>
</reference>
<reference key="20">
    <citation type="journal article" date="2006" name="J. Biol. Chem.">
        <title>The polycomb group protein EZH2 is required for mammalian circadian clock function.</title>
        <authorList>
            <person name="Etchegaray J.P."/>
            <person name="Yang X."/>
            <person name="DeBruyne J.P."/>
            <person name="Peters A.H."/>
            <person name="Weaver D.R."/>
            <person name="Jenuwein T."/>
            <person name="Reppert S.M."/>
        </authorList>
    </citation>
    <scope>INTERACTION WITH CLOCK AND BMAL1</scope>
</reference>
<reference key="21">
    <citation type="journal article" date="2006" name="Mol. Cell. Biol.">
        <title>Functional evolution of the photolyase/cryptochrome protein family: importance of the C terminus of mammalian CRY1 for circadian core oscillator performance.</title>
        <authorList>
            <person name="Chaves I."/>
            <person name="Yagita K."/>
            <person name="Barnhoorn S."/>
            <person name="Okamura H."/>
            <person name="van der Horst G.T.J."/>
            <person name="Tamanini F."/>
        </authorList>
    </citation>
    <scope>INTERACTION WITH CRY1 AND CRY2</scope>
    <scope>SUBCELLULAR LOCATION</scope>
</reference>
<reference key="22">
    <citation type="journal article" date="2006" name="Proc. Natl. Acad. Sci. U.S.A.">
        <title>Posttranslational regulation of the mammalian circadian clock by cryptochrome and protein phosphatase 5.</title>
        <authorList>
            <person name="Partch C.L."/>
            <person name="Shields K.F."/>
            <person name="Thompson C.L."/>
            <person name="Selby C.P."/>
            <person name="Sancar A."/>
        </authorList>
    </citation>
    <scope>TISSUE SPECIFICITY</scope>
    <scope>INDUCTION</scope>
</reference>
<reference key="23">
    <citation type="journal article" date="2009" name="Mol. Cell. Biol.">
        <title>Casein kinase 1 delta regulates the pace of the mammalian circadian clock.</title>
        <authorList>
            <person name="Etchegaray J.P."/>
            <person name="Machida K.K."/>
            <person name="Noton E."/>
            <person name="Constance C.M."/>
            <person name="Dallmann R."/>
            <person name="Di Napoli M.N."/>
            <person name="DeBruyne J.P."/>
            <person name="Lambert C.M."/>
            <person name="Yu E.A."/>
            <person name="Reppert S.M."/>
            <person name="Weaver D.R."/>
        </authorList>
    </citation>
    <scope>SUBCELLULAR LOCATION</scope>
    <scope>PHOSPHORYLATION BY CSNK1D AND CSNK1E</scope>
</reference>
<reference key="24">
    <citation type="journal article" date="2010" name="Cell">
        <title>A tissue-specific atlas of mouse protein phosphorylation and expression.</title>
        <authorList>
            <person name="Huttlin E.L."/>
            <person name="Jedrychowski M.P."/>
            <person name="Elias J.E."/>
            <person name="Goswami T."/>
            <person name="Rad R."/>
            <person name="Beausoleil S.A."/>
            <person name="Villen J."/>
            <person name="Haas W."/>
            <person name="Sowa M.E."/>
            <person name="Gygi S.P."/>
        </authorList>
    </citation>
    <scope>PHOSPHORYLATION [LARGE SCALE ANALYSIS] AT SER-704</scope>
    <scope>IDENTIFICATION BY MASS SPECTROMETRY [LARGE SCALE ANALYSIS]</scope>
    <source>
        <tissue>Kidney</tissue>
        <tissue>Testis</tissue>
    </source>
</reference>
<reference key="25">
    <citation type="journal article" date="2011" name="PLoS ONE">
        <title>Protein phosphatase 1 (PP1) is a post-translational regulator of the mammalian circadian clock.</title>
        <authorList>
            <person name="Schmutz I."/>
            <person name="Wendt S."/>
            <person name="Schnell A."/>
            <person name="Kramer A."/>
            <person name="Mansuy I.M."/>
            <person name="Albrecht U."/>
        </authorList>
    </citation>
    <scope>SUBCELLULAR LOCATION</scope>
    <scope>DEPHOSPHORYLATION</scope>
</reference>
<reference key="26">
    <citation type="journal article" date="2011" name="Proc. Natl. Acad. Sci. U.S.A.">
        <title>The period of the circadian oscillator is primarily determined by the balance between casein kinase 1 and protein phosphatase 1.</title>
        <authorList>
            <person name="Lee H.M."/>
            <person name="Chen R."/>
            <person name="Kim H."/>
            <person name="Etchegaray J.P."/>
            <person name="Weaver D.R."/>
            <person name="Lee C."/>
        </authorList>
    </citation>
    <scope>FUNCTION IN CIRCADIAN CLOCK</scope>
    <scope>PHOSPHORYLATION BY CSNK1D AND CKSN1E</scope>
    <scope>SUBCELLULAR LOCATION</scope>
</reference>
<reference key="27">
    <citation type="journal article" date="2012" name="Biol. Open">
        <title>Regulation of behavioral circadian rhythms and clock protein PER1 by the deubiquitinating enzyme USP2.</title>
        <authorList>
            <person name="Yang Y."/>
            <person name="Duguay D."/>
            <person name="Bedard N."/>
            <person name="Rachalski A."/>
            <person name="Baquiran G."/>
            <person name="Na C.H."/>
            <person name="Fahrenkrug J."/>
            <person name="Storch K.F."/>
            <person name="Peng J."/>
            <person name="Wing S.S."/>
            <person name="Cermakian N."/>
        </authorList>
    </citation>
    <scope>INTERACTION WITH USP2</scope>
    <scope>UBIQUITINATION</scope>
    <scope>DEUBIQUITINATION</scope>
</reference>
<reference key="28">
    <citation type="journal article" date="2012" name="Mol. Cell. Biol.">
        <title>Distinct roles of DBHS family members in the circadian transcriptional feedback loop.</title>
        <authorList>
            <person name="Kowalska E."/>
            <person name="Ripperger J.A."/>
            <person name="Muheim C."/>
            <person name="Maier B."/>
            <person name="Kurihara Y."/>
            <person name="Fox A.H."/>
            <person name="Kramer A."/>
            <person name="Brown S.A."/>
        </authorList>
    </citation>
    <scope>INTERACTION WITH SFPQ AND NONO</scope>
</reference>
<reference key="29">
    <citation type="journal article" date="2013" name="Am. J. Physiol.">
        <title>A role for the circadian clock protein Per1 in the regulation of aldosterone levels and renal Na+ retention.</title>
        <authorList>
            <person name="Richards J."/>
            <person name="Cheng K.Y."/>
            <person name="All S."/>
            <person name="Skopis G."/>
            <person name="Jeffers L."/>
            <person name="Lynch I.J."/>
            <person name="Wingo C.S."/>
            <person name="Gumz M.L."/>
        </authorList>
    </citation>
    <scope>FUNCTION CRY2 REPRESSOR</scope>
    <scope>INTERACTION WITH CRY2; CLOCK AND BMAL1</scope>
    <scope>TISSUE SPECIFICITY</scope>
</reference>
<reference key="30">
    <citation type="journal article" date="2013" name="Physiol. Rev.">
        <title>Metabolism and the circadian clock converge.</title>
        <authorList>
            <person name="Eckel-Mahan K."/>
            <person name="Sassone-Corsi P."/>
        </authorList>
    </citation>
    <scope>REVIEW</scope>
</reference>
<reference key="31">
    <citation type="journal article" date="2014" name="Exp. Mol. Med.">
        <title>Presence of multiple peripheral circadian oscillators in the tissues controlling voiding function in mice.</title>
        <authorList>
            <person name="Noh J.Y."/>
            <person name="Han D.H."/>
            <person name="Kim M.H."/>
            <person name="Ko I.G."/>
            <person name="Kim S.E."/>
            <person name="Park N."/>
            <person name="Kyoung Choe H."/>
            <person name="Kim K.H."/>
            <person name="Kim K."/>
            <person name="Kim C.J."/>
            <person name="Cho S."/>
        </authorList>
    </citation>
    <scope>INDUCTION</scope>
    <scope>TISSUE SPECIFICITY</scope>
    <scope>DISRUPTION PHENOTYPE</scope>
</reference>
<reference key="32">
    <citation type="journal article" date="2014" name="J. Biol. Chem.">
        <title>A Role for the circadian clock protein Per1 in the regulation of the NaCl Co-transporter (NCC) and the with-no-lysine kinase (WNK) cascade in mouse distal convoluted tubule cells.</title>
        <authorList>
            <person name="Richards J."/>
            <person name="Ko B."/>
            <person name="All S."/>
            <person name="Cheng K.Y."/>
            <person name="Hoover R.S."/>
            <person name="Gumz M.L."/>
        </authorList>
    </citation>
    <scope>FUNCTION AS TRANSCRIPTIONAL ACTIVATOR</scope>
    <scope>TISSUE SPECIFICITY</scope>
    <scope>SUBCELLULAR LOCATION</scope>
</reference>
<reference key="33">
    <citation type="journal article" date="2014" name="Mol. Cell. Endocrinol.">
        <title>Modulation of glucocorticoid receptor induction properties by core circadian clock proteins.</title>
        <authorList>
            <person name="Han D.H."/>
            <person name="Lee Y.J."/>
            <person name="Kim K."/>
            <person name="Kim C.J."/>
            <person name="Cho S."/>
        </authorList>
    </citation>
    <scope>FUNCTION IN GR REPRESSION</scope>
</reference>
<reference key="34">
    <citation type="journal article" date="2014" name="Mol. Cell">
        <title>Rhythmic U2af26 alternative splicing controls PERIOD1 stability and the circadian clock in mice.</title>
        <authorList>
            <person name="Preussner M."/>
            <person name="Wilhelmi I."/>
            <person name="Schultz A.S."/>
            <person name="Finkernagel F."/>
            <person name="Michel M."/>
            <person name="Moeroey T."/>
            <person name="Heyd F."/>
        </authorList>
    </citation>
    <scope>INTERACTION WITH U2AF1L4</scope>
</reference>
<reference key="35">
    <citation type="journal article" date="2014" name="Trends Cell Biol.">
        <title>Molecular architecture of the mammalian circadian clock.</title>
        <authorList>
            <person name="Partch C.L."/>
            <person name="Green C.B."/>
            <person name="Takahashi J.S."/>
        </authorList>
    </citation>
    <scope>REVIEW</scope>
</reference>
<reference key="36">
    <citation type="journal article" date="2012" name="Proc. Natl. Acad. Sci. U.S.A.">
        <title>Unwinding the differences of the mammalian PERIOD clock proteins from crystal structure to cellular function.</title>
        <authorList>
            <person name="Kucera N."/>
            <person name="Schmalen I."/>
            <person name="Hennig S."/>
            <person name="Ollinger R."/>
            <person name="Strauss H.M."/>
            <person name="Grudziecki A."/>
            <person name="Wieczorek C."/>
            <person name="Kramer A."/>
            <person name="Wolf E."/>
        </authorList>
    </citation>
    <scope>X-RAY CRYSTALLOGRAPHY (2.75 ANGSTROMS) OF 191-502</scope>
    <scope>MUTAGENESIS OF TYR-267; PHE-444 AND TRP-448</scope>
    <scope>FUNCTION IN HEME BINDING</scope>
    <scope>SUBUNIT</scope>
</reference>
<proteinExistence type="evidence at protein level"/>
<keyword id="KW-0002">3D-structure</keyword>
<keyword id="KW-0090">Biological rhythms</keyword>
<keyword id="KW-0963">Cytoplasm</keyword>
<keyword id="KW-0539">Nucleus</keyword>
<keyword id="KW-0597">Phosphoprotein</keyword>
<keyword id="KW-1185">Reference proteome</keyword>
<keyword id="KW-0677">Repeat</keyword>
<keyword id="KW-0804">Transcription</keyword>
<keyword id="KW-0805">Transcription regulation</keyword>
<keyword id="KW-0832">Ubl conjugation</keyword>
<gene>
    <name type="primary">Per1</name>
    <name type="synonym">Per</name>
    <name type="synonym">Rigui</name>
</gene>
<comment type="function">
    <text evidence="11 16 19 23 24 27 28 30 35">Transcriptional repressor which forms a core component of the circadian clock. The circadian clock, an internal time-keeping system, regulates various physiological processes through the generation of approximately 24 hour circadian rhythms in gene expression, which are translated into rhythms in metabolism and behavior. It is derived from the Latin roots 'circa' (about) and 'diem' (day) and acts as an important regulator of a wide array of physiological functions including metabolism, sleep, body temperature, blood pressure, endocrine, immune, cardiovascular, and renal function. Consists of two major components: the central clock, residing in the suprachiasmatic nucleus (SCN) of the brain, and the peripheral clocks that are present in nearly every tissue and organ system. Both the central and peripheral clocks can be reset by environmental cues, also known as Zeitgebers (German for 'timegivers'). The predominant Zeitgeber for the central clock is light, which is sensed by retina and signals directly to the SCN. The central clock entrains the peripheral clocks through neuronal and hormonal signals, body temperature and feeding-related cues, aligning all clocks with the external light/dark cycle. Circadian rhythms allow an organism to achieve temporal homeostasis with its environment at the molecular level by regulating gene expression to create a peak of protein expression once every 24 hours to control when a particular physiological process is most active with respect to the solar day. Transcription and translation of core clock components (CLOCK, NPAS2, BMAL1, BMAL2, PER1, PER2, PER3, CRY1 and CRY2) plays a critical role in rhythm generation, whereas delays imposed by post-translational modifications (PTMs) are important for determining the period (tau) of the rhythms (tau refers to the period of a rhythm and is the length, in time, of one complete cycle). A diurnal rhythm is synchronized with the day/night cycle, while the ultradian and infradian rhythms have a period shorter and longer than 24 hours, respectively. Disruptions in the circadian rhythms contribute to the pathology of cardiovascular diseases, cancer, metabolic syndromes and aging. A transcription/translation feedback loop (TTFL) forms the core of the molecular circadian clock mechanism. Transcription factors, CLOCK or NPAS2 and BMAL1 or BMAL2, form the positive limb of the feedback loop, act in the form of a heterodimer and activate the transcription of core clock genes and clock-controlled genes (involved in key metabolic processes), harboring E-box elements (5'-CACGTG-3') within their promoters. The core clock genes: PER1/2/3 and CRY1/2 which are transcriptional repressors form the negative limb of the feedback loop and interact with the CLOCK|NPAS2-BMAL1|BMAL2 heterodimer inhibiting its activity and thereby negatively regulating their own expression. This heterodimer also activates nuclear receptors NR1D1/2 and RORA/B/G, which form a second feedback loop and which activate and repress BMAL1 transcription, respectively. Regulates circadian target genes expression at post-transcriptional levels, but may not be required for the repression at transcriptional level. Controls PER2 protein decay. Represses CRY2 preventing its repression on CLOCK/BMAL1 target genes such as FXYD5 and SCNN1A in kidney and PPARA in liver. Besides its involvement in the maintenance of the circadian clock, has an important function in the regulation of several processes. Participates in the repression of glucocorticoid receptor NR3C1/GR-induced transcriptional activity by reducing the association of NR3C1/GR to glucocorticoid response elements (GREs) by BMAL1:CLOCK. Plays a role in the modulation of the neuroinflammatory state via the regulation of inflammatory mediators release, such as CCL2 and IL6. In spinal astrocytes, negatively regulates the MAPK14/p38 and MAPK8/JNK MAPK cascades as well as the subsequent activation of NFkappaB. Coordinately regulates the expression of multiple genes that are involved in the regulation of renal sodium reabsorption. Can act as gene expression activator in a gene and tissue specific manner, in kidney enhances WNK1 and SLC12A3 expression in collaboration with CLOCK. Modulates hair follicle cycling. Represses the CLOCK-BMAL1 induced transcription of BHLHE40/DEC1.</text>
</comment>
<comment type="subunit">
    <text evidence="1 3 7 8 10 13 15 17 20 21 24 25 26 27 31 35">Homodimer (PubMed:22331899). Component of the circadian core oscillator, which includes the CRY proteins, CLOCK or NPAS2, BMAL1 or BMAL2, CSNK1D and/or CSNK1E, TIMELESS, and the PER proteins (PubMed:11779462). Interacts directly with TIMELESS (PubMed:10231394, PubMed:9856465). Interacts directly with PER2, PER3, CRY1 and CRY2 (PubMed:10428031, PubMed:10848614, PubMed:11875063, PubMed:14701732, PubMed:16478995, PubMed:24154698). Interacts with BMAL1 and CLOCK (PubMed:16717091, PubMed:24154698). Interacts with GPRASP1 (By similarity). Interacts (phosphorylated) with BTRC and FBXW11; the interactions trigger proteasomal degradation (By similarity). Interacts with NONO and SFPQ (PubMed:22966205). Interacts with WDR5 (By similarity). Interacts with U2AF1L4 (Isoform 3) (PubMed:24837677). Interacts with USP2 (PubMed:23213472). Interacts with HNF4A (By similarity).</text>
</comment>
<comment type="interaction">
    <interactant intactId="EBI-1266764">
        <id>O35973</id>
    </interactant>
    <interactant intactId="EBI-1266607">
        <id>P97784</id>
        <label>Cry1</label>
    </interactant>
    <organismsDiffer>false</organismsDiffer>
    <experiments>3</experiments>
</comment>
<comment type="interaction">
    <interactant intactId="EBI-1266764">
        <id>O35973</id>
    </interactant>
    <interactant intactId="EBI-1266619">
        <id>Q9R194</id>
        <label>Cry2</label>
    </interactant>
    <organismsDiffer>false</organismsDiffer>
    <experiments>3</experiments>
</comment>
<comment type="interaction">
    <interactant intactId="EBI-1266764">
        <id>O35973</id>
    </interactant>
    <interactant intactId="EBI-771709">
        <id>Q9JMK2</id>
        <label>Csnk1e</label>
    </interactant>
    <organismsDiffer>false</organismsDiffer>
    <experiments>2</experiments>
</comment>
<comment type="interaction">
    <interactant intactId="EBI-1266764">
        <id>O35973</id>
    </interactant>
    <interactant intactId="EBI-1266779">
        <id>O54943</id>
        <label>Per2</label>
    </interactant>
    <organismsDiffer>false</organismsDiffer>
    <experiments>5</experiments>
</comment>
<comment type="interaction">
    <interactant intactId="EBI-1266764">
        <id>O35973</id>
    </interactant>
    <interactant intactId="EBI-1793117">
        <id>Q9R1X4</id>
        <label>Timeless</label>
    </interactant>
    <organismsDiffer>false</organismsDiffer>
    <experiments>3</experiments>
</comment>
<comment type="subcellular location">
    <subcellularLocation>
        <location>Nucleus</location>
    </subcellularLocation>
    <subcellularLocation>
        <location>Cytoplasm</location>
    </subcellularLocation>
    <text>Nucleocytoplasmic shuttling is effected by interaction with other circadian core oscillator proteins and/or by phosphorylation. Retention of PER1 in the cytoplasm occurs through PER1-PER2 heterodimer formation. Translocate to the nucleus after phosphorylation by CSNK1D or CSNK1E. Also translocated to the nucleus by CRY1 or CRY2.</text>
</comment>
<comment type="tissue specificity">
    <text evidence="9 22 27 29 30 33 34">In brain, highest expression is observed in the SCN. Highly expressed in the pyramidal cell layer of the piriform cortex, the periventricular part of the caudate-putamen, many thalamic nuclei, and the granular layer of the cerebellar cortex. Weaker expression is detected in most area of the brain, including cortical and non cortical structures. Expression but no oscillations occurs in the glomerular and mitral cell layers of the olfactory bulb, the internal granular layer of the cerebellum, the cornu ammonis and dentate gyrus of the hippocampus, the cerebral and piriform cortices. Expressed in the renal cortex (at protein level). Also found in heart, brain, bladder, lumbar spinal cord, spleen, lung, liver, skeletal muscle and testis.</text>
</comment>
<comment type="developmental stage">
    <text>Expressed in the suprachiasmatic nucleus (SCN) during late fetal and early neonatal life.</text>
</comment>
<comment type="induction">
    <text evidence="9 13 22 29 32 33 34">In the suprachiasmatic nucleus (SCN), behaves like a day-type oscillator, with maximum expression during the light period. Oscillations are maintained under constant darkness and are responsive to changes of the light/dark cycles. There is a 4 hour time delay between PER1 and PER2 oscillations. The expression rhythms appear to originate from retina. In liver, peak levels at CT9. In the SCN, levels increase by light exposure during subjective night. Circadian oscillations also observed in skeletal muscle, bladder, lumbar spinal cord and liver but not in testis.</text>
</comment>
<comment type="PTM">
    <text evidence="14">Phosphorylated on serine residues by CSNK1D, CSNK1E and probably also by CSNK1G2. Phosphorylation by CSNK1D or CSNK1E promotes nuclear location of PER proteins as well as ubiquitination and subsequent degradation. May be dephosphorylated by PP1.</text>
</comment>
<comment type="PTM">
    <text evidence="14 26">Ubiquitinated; requires phosphorylation by CSNK1E and interaction with BTRC and FBXW11. Deubiquitinated by USP2.</text>
</comment>
<comment type="disruption phenotype">
    <text evidence="11 19 29">Animals show disrupted circadian behavior. The prolongation of light exposure produces larger phase delay of behavioral rhythm compared to wild-types. Double knocknouts for PER2 and PER1 show an abrupt loss of rhythmicity immediately upon transfer to exprosure to constant darkness. Animals have largely affected the water intake (polydipsia) and urine volume (polyuria).</text>
</comment>
<dbReference type="EMBL" id="AF022992">
    <property type="protein sequence ID" value="AAC53355.1"/>
    <property type="molecule type" value="mRNA"/>
</dbReference>
<dbReference type="EMBL" id="AB002108">
    <property type="protein sequence ID" value="BAA22634.1"/>
    <property type="molecule type" value="mRNA"/>
</dbReference>
<dbReference type="EMBL" id="AB030818">
    <property type="protein sequence ID" value="BAA94086.1"/>
    <property type="molecule type" value="Genomic_DNA"/>
</dbReference>
<dbReference type="EMBL" id="AL645527">
    <property type="status" value="NOT_ANNOTATED_CDS"/>
    <property type="molecule type" value="Genomic_DNA"/>
</dbReference>
<dbReference type="CCDS" id="CCDS24882.1"/>
<dbReference type="PIR" id="T00019">
    <property type="entry name" value="T00019"/>
</dbReference>
<dbReference type="RefSeq" id="NP_001152839.1">
    <property type="nucleotide sequence ID" value="NM_001159367.2"/>
</dbReference>
<dbReference type="RefSeq" id="NP_035195.2">
    <property type="nucleotide sequence ID" value="NM_011065.5"/>
</dbReference>
<dbReference type="RefSeq" id="XP_006532543.1">
    <property type="nucleotide sequence ID" value="XM_006532480.4"/>
</dbReference>
<dbReference type="PDB" id="4DJ2">
    <property type="method" value="X-ray"/>
    <property type="resolution" value="2.75 A"/>
    <property type="chains" value="A/B/C/D=191-502"/>
</dbReference>
<dbReference type="PDBsum" id="4DJ2"/>
<dbReference type="SMR" id="O35973"/>
<dbReference type="BioGRID" id="202111">
    <property type="interactions" value="27"/>
</dbReference>
<dbReference type="ComplexPortal" id="CPX-3214">
    <property type="entry name" value="Cry2-Per1 complex"/>
</dbReference>
<dbReference type="ComplexPortal" id="CPX-3216">
    <property type="entry name" value="Cry1-Per1 complex"/>
</dbReference>
<dbReference type="CORUM" id="O35973"/>
<dbReference type="DIP" id="DIP-38519N"/>
<dbReference type="ELM" id="O35973"/>
<dbReference type="FunCoup" id="O35973">
    <property type="interactions" value="1825"/>
</dbReference>
<dbReference type="IntAct" id="O35973">
    <property type="interactions" value="18"/>
</dbReference>
<dbReference type="MINT" id="O35973"/>
<dbReference type="STRING" id="10090.ENSMUSP00000021271"/>
<dbReference type="GlyGen" id="O35973">
    <property type="glycosylation" value="5 sites, 1 O-linked glycan (1 site)"/>
</dbReference>
<dbReference type="iPTMnet" id="O35973"/>
<dbReference type="PhosphoSitePlus" id="O35973"/>
<dbReference type="PaxDb" id="10090-ENSMUSP00000021271"/>
<dbReference type="ProteomicsDB" id="288028"/>
<dbReference type="Pumba" id="O35973"/>
<dbReference type="Antibodypedia" id="24542">
    <property type="antibodies" value="254 antibodies from 35 providers"/>
</dbReference>
<dbReference type="DNASU" id="18626"/>
<dbReference type="Ensembl" id="ENSMUST00000021271.14">
    <property type="protein sequence ID" value="ENSMUSP00000021271.8"/>
    <property type="gene ID" value="ENSMUSG00000020893.18"/>
</dbReference>
<dbReference type="Ensembl" id="ENSMUST00000166748.8">
    <property type="protein sequence ID" value="ENSMUSP00000132635.2"/>
    <property type="gene ID" value="ENSMUSG00000020893.18"/>
</dbReference>
<dbReference type="GeneID" id="18626"/>
<dbReference type="KEGG" id="mmu:18626"/>
<dbReference type="UCSC" id="uc007jpg.2">
    <property type="organism name" value="mouse"/>
</dbReference>
<dbReference type="AGR" id="MGI:1098283"/>
<dbReference type="CTD" id="5187"/>
<dbReference type="MGI" id="MGI:1098283">
    <property type="gene designation" value="Per1"/>
</dbReference>
<dbReference type="VEuPathDB" id="HostDB:ENSMUSG00000020893"/>
<dbReference type="eggNOG" id="KOG3753">
    <property type="taxonomic scope" value="Eukaryota"/>
</dbReference>
<dbReference type="GeneTree" id="ENSGT00940000159217"/>
<dbReference type="HOGENOM" id="CLU_006667_0_0_1"/>
<dbReference type="InParanoid" id="O35973"/>
<dbReference type="OMA" id="GCTGCKC"/>
<dbReference type="OrthoDB" id="7788983at2759"/>
<dbReference type="PhylomeDB" id="O35973"/>
<dbReference type="TreeFam" id="TF318445"/>
<dbReference type="BioGRID-ORCS" id="18626">
    <property type="hits" value="2 hits in 81 CRISPR screens"/>
</dbReference>
<dbReference type="ChiTaRS" id="Per1">
    <property type="organism name" value="mouse"/>
</dbReference>
<dbReference type="EvolutionaryTrace" id="O35973"/>
<dbReference type="PRO" id="PR:O35973"/>
<dbReference type="Proteomes" id="UP000000589">
    <property type="component" value="Chromosome 11"/>
</dbReference>
<dbReference type="RNAct" id="O35973">
    <property type="molecule type" value="protein"/>
</dbReference>
<dbReference type="Bgee" id="ENSMUSG00000020893">
    <property type="expression patterns" value="Expressed in granulocyte and 259 other cell types or tissues"/>
</dbReference>
<dbReference type="ExpressionAtlas" id="O35973">
    <property type="expression patterns" value="baseline and differential"/>
</dbReference>
<dbReference type="GO" id="GO:0005829">
    <property type="term" value="C:cytosol"/>
    <property type="evidence" value="ECO:0000304"/>
    <property type="project" value="Reactome"/>
</dbReference>
<dbReference type="GO" id="GO:0005654">
    <property type="term" value="C:nucleoplasm"/>
    <property type="evidence" value="ECO:0000304"/>
    <property type="project" value="Reactome"/>
</dbReference>
<dbReference type="GO" id="GO:0005634">
    <property type="term" value="C:nucleus"/>
    <property type="evidence" value="ECO:0000314"/>
    <property type="project" value="UniProtKB"/>
</dbReference>
<dbReference type="GO" id="GO:0031490">
    <property type="term" value="F:chromatin DNA binding"/>
    <property type="evidence" value="ECO:0000314"/>
    <property type="project" value="UniProtKB"/>
</dbReference>
<dbReference type="GO" id="GO:0140297">
    <property type="term" value="F:DNA-binding transcription factor binding"/>
    <property type="evidence" value="ECO:0000353"/>
    <property type="project" value="UniProtKB"/>
</dbReference>
<dbReference type="GO" id="GO:0070888">
    <property type="term" value="F:E-box binding"/>
    <property type="evidence" value="ECO:0007669"/>
    <property type="project" value="Ensembl"/>
</dbReference>
<dbReference type="GO" id="GO:0019900">
    <property type="term" value="F:kinase binding"/>
    <property type="evidence" value="ECO:0000353"/>
    <property type="project" value="UniProtKB"/>
</dbReference>
<dbReference type="GO" id="GO:0000976">
    <property type="term" value="F:transcription cis-regulatory region binding"/>
    <property type="evidence" value="ECO:0000314"/>
    <property type="project" value="UniProtKB"/>
</dbReference>
<dbReference type="GO" id="GO:0031625">
    <property type="term" value="F:ubiquitin protein ligase binding"/>
    <property type="evidence" value="ECO:0007669"/>
    <property type="project" value="Ensembl"/>
</dbReference>
<dbReference type="GO" id="GO:0006338">
    <property type="term" value="P:chromatin remodeling"/>
    <property type="evidence" value="ECO:0000315"/>
    <property type="project" value="UniProtKB"/>
</dbReference>
<dbReference type="GO" id="GO:0032922">
    <property type="term" value="P:circadian regulation of gene expression"/>
    <property type="evidence" value="ECO:0000314"/>
    <property type="project" value="UniProtKB"/>
</dbReference>
<dbReference type="GO" id="GO:0007623">
    <property type="term" value="P:circadian rhythm"/>
    <property type="evidence" value="ECO:0000270"/>
    <property type="project" value="UniProtKB"/>
</dbReference>
<dbReference type="GO" id="GO:0043153">
    <property type="term" value="P:entrainment of circadian clock by photoperiod"/>
    <property type="evidence" value="ECO:0000315"/>
    <property type="project" value="UniProtKB"/>
</dbReference>
<dbReference type="GO" id="GO:0043124">
    <property type="term" value="P:negative regulation of canonical NF-kappaB signal transduction"/>
    <property type="evidence" value="ECO:0000250"/>
    <property type="project" value="UniProtKB"/>
</dbReference>
<dbReference type="GO" id="GO:0045892">
    <property type="term" value="P:negative regulation of DNA-templated transcription"/>
    <property type="evidence" value="ECO:0000314"/>
    <property type="project" value="UniProtKB"/>
</dbReference>
<dbReference type="GO" id="GO:0046329">
    <property type="term" value="P:negative regulation of JNK cascade"/>
    <property type="evidence" value="ECO:0000250"/>
    <property type="project" value="UniProtKB"/>
</dbReference>
<dbReference type="GO" id="GO:2000323">
    <property type="term" value="P:negative regulation of nuclear receptor-mediated glucocorticoid signaling pathway"/>
    <property type="evidence" value="ECO:0000315"/>
    <property type="project" value="UniProtKB"/>
</dbReference>
<dbReference type="GO" id="GO:0000122">
    <property type="term" value="P:negative regulation of transcription by RNA polymerase II"/>
    <property type="evidence" value="ECO:0000314"/>
    <property type="project" value="BHF-UCL"/>
</dbReference>
<dbReference type="GO" id="GO:0045944">
    <property type="term" value="P:positive regulation of transcription by RNA polymerase II"/>
    <property type="evidence" value="ECO:0000315"/>
    <property type="project" value="UniProtKB"/>
</dbReference>
<dbReference type="GO" id="GO:0010608">
    <property type="term" value="P:post-transcriptional regulation of gene expression"/>
    <property type="evidence" value="ECO:0000315"/>
    <property type="project" value="UniProtKB"/>
</dbReference>
<dbReference type="GO" id="GO:0042752">
    <property type="term" value="P:regulation of circadian rhythm"/>
    <property type="evidence" value="ECO:0000315"/>
    <property type="project" value="UniProtKB"/>
</dbReference>
<dbReference type="GO" id="GO:1900015">
    <property type="term" value="P:regulation of cytokine production involved in inflammatory response"/>
    <property type="evidence" value="ECO:0000250"/>
    <property type="project" value="UniProtKB"/>
</dbReference>
<dbReference type="GO" id="GO:0042634">
    <property type="term" value="P:regulation of hair cycle"/>
    <property type="evidence" value="ECO:0000250"/>
    <property type="project" value="UniProtKB"/>
</dbReference>
<dbReference type="GO" id="GO:1900744">
    <property type="term" value="P:regulation of p38MAPK cascade"/>
    <property type="evidence" value="ECO:0000250"/>
    <property type="project" value="UniProtKB"/>
</dbReference>
<dbReference type="GO" id="GO:0002028">
    <property type="term" value="P:regulation of sodium ion transport"/>
    <property type="evidence" value="ECO:0000315"/>
    <property type="project" value="UniProtKB"/>
</dbReference>
<dbReference type="GO" id="GO:0051591">
    <property type="term" value="P:response to cAMP"/>
    <property type="evidence" value="ECO:0000314"/>
    <property type="project" value="UniProtKB"/>
</dbReference>
<dbReference type="CDD" id="cd00130">
    <property type="entry name" value="PAS"/>
    <property type="match status" value="1"/>
</dbReference>
<dbReference type="FunFam" id="3.30.450.20:FF:000013">
    <property type="entry name" value="Period circadian protein homolog 2"/>
    <property type="match status" value="1"/>
</dbReference>
<dbReference type="FunFam" id="3.30.450.20:FF:000004">
    <property type="entry name" value="Period circadian protein homolog 3"/>
    <property type="match status" value="1"/>
</dbReference>
<dbReference type="Gene3D" id="3.30.450.20">
    <property type="entry name" value="PAS domain"/>
    <property type="match status" value="2"/>
</dbReference>
<dbReference type="InterPro" id="IPR000014">
    <property type="entry name" value="PAS"/>
</dbReference>
<dbReference type="InterPro" id="IPR035965">
    <property type="entry name" value="PAS-like_dom_sf"/>
</dbReference>
<dbReference type="InterPro" id="IPR013655">
    <property type="entry name" value="PAS_fold_3"/>
</dbReference>
<dbReference type="InterPro" id="IPR048814">
    <property type="entry name" value="Per1-3_PAS-A"/>
</dbReference>
<dbReference type="InterPro" id="IPR022728">
    <property type="entry name" value="Period_circadian-like_C"/>
</dbReference>
<dbReference type="InterPro" id="IPR050760">
    <property type="entry name" value="Period_circadian_regulator"/>
</dbReference>
<dbReference type="PANTHER" id="PTHR11269">
    <property type="entry name" value="PERIOD CIRCADIAN PROTEIN"/>
    <property type="match status" value="1"/>
</dbReference>
<dbReference type="PANTHER" id="PTHR11269:SF8">
    <property type="entry name" value="PERIOD CIRCADIAN PROTEIN HOMOLOG 1"/>
    <property type="match status" value="1"/>
</dbReference>
<dbReference type="Pfam" id="PF23170">
    <property type="entry name" value="bHLH_PER"/>
    <property type="match status" value="1"/>
</dbReference>
<dbReference type="Pfam" id="PF08447">
    <property type="entry name" value="PAS_3"/>
    <property type="match status" value="1"/>
</dbReference>
<dbReference type="Pfam" id="PF21353">
    <property type="entry name" value="Per3-like_PAS-A"/>
    <property type="match status" value="1"/>
</dbReference>
<dbReference type="Pfam" id="PF12114">
    <property type="entry name" value="Period_C"/>
    <property type="match status" value="1"/>
</dbReference>
<dbReference type="SMART" id="SM00091">
    <property type="entry name" value="PAS"/>
    <property type="match status" value="2"/>
</dbReference>
<dbReference type="SUPFAM" id="SSF55785">
    <property type="entry name" value="PYP-like sensor domain (PAS domain)"/>
    <property type="match status" value="1"/>
</dbReference>
<dbReference type="PROSITE" id="PS50112">
    <property type="entry name" value="PAS"/>
    <property type="match status" value="1"/>
</dbReference>
<name>PER1_MOUSE</name>
<sequence>MSGPLEGADGGGDPRPGEPFCPGGVPSPGAPQHRPCPGPSLADDTDANSNGSSGNESNGPESRGASQRSSHSSSSGNGKDSALLETTESSKSTNSQSPSPPSSSIAYSLLSASSEQDNPSTSGCSSEQSARARTQKELMTALRELKLRLPPERRGKGRSGTLATLQYALACVKQVQANQEYYQQWSLEEGEPCAMDMSTYTLEELEHITSEYTLRNQDTFSVAVSFLTGRIVYISEQAGVLLRCKRDVFRGARFSELLAPQDVGVFYGSTTPSRLPTWGTGTSAGSGLKDFTQEKSVFCRIRGGPDRDPGPRYQPFRLTPYVTKIRVSDGAPAQPCCLLIAERIHSGYEAPRIPPDKRIFTTRHTPSCLFQDVDERAAPLLGYLPQDLLGAPVLLFLHPEDRPLMLAIHKKILQLAGQPFDHSPIRFCARNGEYVTMDTSWAGFVHPWSRKVAFVLGRHKVRTAPLNEDVFTPPAPSPAPSLDSDIQELSEQIHRLLLQPVHSSSPTGLCGVGPLMSPGPLHSPGSSSDSNGGDAEGPGPPAPVTFQQICKDVHLVKHQGQQLFIESRAKPPPRPRLLATGTFKAKVLPCQSPNPELEVAPVPDQASLALAPEEPERKETSGCSYQQINCLDSILRYLESCNIPSTTKRKCASSSSYTASSASDDDKQRAGPVPVGAKKDPSSAMLSGEGATPRKEPVVGGTLSPLALANKAESVVSVTSQCSFSSTIVHVGDKKPPESDIIMMEDLPGLAPGPAPSPAPSPTVAPDPTPDAYRPVGLTKAVLSLHTQKEEQAFLNRFRDLGRLRGLDTSSVAPSAPGCHHGPIPPGRRHHCRSKAKRSRHHHHQTPRPETPCYVSHPSPVPSSGPWPPPPATTPFPAMVQPYPLPVFSPRGGPQPLPPAPTSVSPATFPSPLVTPMVALVLPNYLFPTPPSYPYGVSQAPVEGPPTPASHSPSPSLPPPPLSPPHRPDSPLFNSRCSSPLQLNLLQLEESPRTEGGAAAGGPGSSAGPLPPSEETAEPEARLVEVTESSNQDALSGSSDLLELLLQEDSRSGTGSAASGSLGSGLGSGSGSGSHEGGSTSASITRSSQSSHTSKYFGSIDSSEAEAGAARARTEPGDQVIKCVLQDPIWLLMANADQRVMMTYQVPSRDAASVLKQDRERLRAMQKQQPRFSEDQRRELGAVHSWVRKGQLPRALDVTACVDCGSSVQDPGHSDDPLFSELDGLGLEPMEEGGGEGGGCGVGGGGGDGGEEAQTQIGAKGSSSQDSAMEEEEQGGGSSSPALPAEENSTS</sequence>
<accession>O35973</accession>
<accession>B1ASX0</accession>
<feature type="chain" id="PRO_0000162628" description="Period circadian protein homolog 1">
    <location>
        <begin position="1"/>
        <end position="1291"/>
    </location>
</feature>
<feature type="domain" description="PAS 1" evidence="5">
    <location>
        <begin position="208"/>
        <end position="275"/>
    </location>
</feature>
<feature type="domain" description="PAS 2" evidence="5">
    <location>
        <begin position="348"/>
        <end position="414"/>
    </location>
</feature>
<feature type="domain" description="PAC">
    <location>
        <begin position="422"/>
        <end position="465"/>
    </location>
</feature>
<feature type="region of interest" description="Interaction with BTRC" evidence="1">
    <location>
        <begin position="1"/>
        <end position="151"/>
    </location>
</feature>
<feature type="region of interest" description="Disordered" evidence="6">
    <location>
        <begin position="1"/>
        <end position="134"/>
    </location>
</feature>
<feature type="region of interest" description="Disordered" evidence="6">
    <location>
        <begin position="508"/>
        <end position="544"/>
    </location>
</feature>
<feature type="region of interest" description="Required for phosphorylation by CSNK1E">
    <location>
        <begin position="596"/>
        <end position="815"/>
    </location>
</feature>
<feature type="region of interest" description="Disordered" evidence="6">
    <location>
        <begin position="647"/>
        <end position="698"/>
    </location>
</feature>
<feature type="region of interest" description="Disordered" evidence="6">
    <location>
        <begin position="749"/>
        <end position="772"/>
    </location>
</feature>
<feature type="region of interest" description="Disordered" evidence="6">
    <location>
        <begin position="809"/>
        <end position="873"/>
    </location>
</feature>
<feature type="region of interest" description="Disordered" evidence="6">
    <location>
        <begin position="938"/>
        <end position="1037"/>
    </location>
</feature>
<feature type="region of interest" description="Disordered" evidence="6">
    <location>
        <begin position="1051"/>
        <end position="1099"/>
    </location>
</feature>
<feature type="region of interest" description="CRY binding domain">
    <location>
        <begin position="1148"/>
        <end position="1291"/>
    </location>
</feature>
<feature type="region of interest" description="Disordered" evidence="6">
    <location>
        <begin position="1207"/>
        <end position="1291"/>
    </location>
</feature>
<feature type="short sequence motif" description="Nuclear export signal 1" evidence="2">
    <location>
        <begin position="138"/>
        <end position="147"/>
    </location>
</feature>
<feature type="short sequence motif" description="Nuclear export signal 2" evidence="12">
    <location>
        <begin position="489"/>
        <end position="498"/>
    </location>
</feature>
<feature type="short sequence motif" description="Nuclear localization signal" evidence="10">
    <location>
        <begin position="824"/>
        <end position="840"/>
    </location>
</feature>
<feature type="short sequence motif" description="Nuclear export signal 3" evidence="2">
    <location>
        <begin position="981"/>
        <end position="988"/>
    </location>
</feature>
<feature type="short sequence motif" description="LXXLL">
    <location>
        <begin position="1042"/>
        <end position="1046"/>
    </location>
</feature>
<feature type="compositionally biased region" description="Low complexity" evidence="6">
    <location>
        <begin position="48"/>
        <end position="115"/>
    </location>
</feature>
<feature type="compositionally biased region" description="Polar residues" evidence="6">
    <location>
        <begin position="116"/>
        <end position="132"/>
    </location>
</feature>
<feature type="compositionally biased region" description="Low complexity" evidence="6">
    <location>
        <begin position="513"/>
        <end position="533"/>
    </location>
</feature>
<feature type="compositionally biased region" description="Low complexity" evidence="6">
    <location>
        <begin position="652"/>
        <end position="662"/>
    </location>
</feature>
<feature type="compositionally biased region" description="Pro residues" evidence="6">
    <location>
        <begin position="751"/>
        <end position="769"/>
    </location>
</feature>
<feature type="compositionally biased region" description="Basic residues" evidence="6">
    <location>
        <begin position="827"/>
        <end position="846"/>
    </location>
</feature>
<feature type="compositionally biased region" description="Pro residues" evidence="6">
    <location>
        <begin position="859"/>
        <end position="873"/>
    </location>
</feature>
<feature type="compositionally biased region" description="Pro residues" evidence="6">
    <location>
        <begin position="955"/>
        <end position="965"/>
    </location>
</feature>
<feature type="compositionally biased region" description="Polar residues" evidence="6">
    <location>
        <begin position="973"/>
        <end position="985"/>
    </location>
</feature>
<feature type="compositionally biased region" description="Low complexity" evidence="6">
    <location>
        <begin position="1051"/>
        <end position="1061"/>
    </location>
</feature>
<feature type="compositionally biased region" description="Gly residues" evidence="6">
    <location>
        <begin position="1062"/>
        <end position="1076"/>
    </location>
</feature>
<feature type="compositionally biased region" description="Low complexity" evidence="6">
    <location>
        <begin position="1077"/>
        <end position="1094"/>
    </location>
</feature>
<feature type="compositionally biased region" description="Gly residues" evidence="6">
    <location>
        <begin position="1235"/>
        <end position="1248"/>
    </location>
</feature>
<feature type="compositionally biased region" description="Polar residues" evidence="6">
    <location>
        <begin position="1253"/>
        <end position="1267"/>
    </location>
</feature>
<feature type="modified residue" description="Phosphothreonine; by CSNK1E" evidence="4">
    <location>
        <position position="121"/>
    </location>
</feature>
<feature type="modified residue" description="Phosphoserine; by CSNK1E" evidence="4">
    <location>
        <position position="122"/>
    </location>
</feature>
<feature type="modified residue" description="Phosphoserine; by CSNK1E" evidence="4">
    <location>
        <position position="126"/>
    </location>
</feature>
<feature type="modified residue" description="Phosphoserine" evidence="18">
    <location>
        <position position="661"/>
    </location>
</feature>
<feature type="modified residue" description="Phosphoserine" evidence="18">
    <location>
        <position position="663"/>
    </location>
</feature>
<feature type="modified residue" description="Phosphoserine" evidence="37">
    <location>
        <position position="704"/>
    </location>
</feature>
<feature type="modified residue" description="Phosphoserine" evidence="1">
    <location>
        <position position="815"/>
    </location>
</feature>
<feature type="modified residue" description="Phosphoserine" evidence="1">
    <location>
        <position position="978"/>
    </location>
</feature>
<feature type="modified residue" description="Phosphoserine" evidence="1">
    <location>
        <position position="979"/>
    </location>
</feature>
<feature type="mutagenesis site" description="No effect on homodimerization. Abolishes homodimerization; when associated with E-444." evidence="24">
    <original>Y</original>
    <variation>E</variation>
    <location>
        <position position="267"/>
    </location>
</feature>
<feature type="mutagenesis site" description="Reduces homodimerization. Abolishes homodimerization; when associated with E-267." evidence="24">
    <original>F</original>
    <variation>E</variation>
    <location>
        <position position="444"/>
    </location>
</feature>
<feature type="mutagenesis site" description="Abolishes homodimerization." evidence="24">
    <original>W</original>
    <variation>E</variation>
    <location>
        <position position="448"/>
    </location>
</feature>
<feature type="mutagenesis site" description="Reduced phosphorylation. No nuclear entry of PER1, CRY1 nor CKSN1E; when associated with A-663.">
    <original>S</original>
    <variation>A</variation>
    <location>
        <position position="661"/>
    </location>
</feature>
<feature type="mutagenesis site" description="Reduced phosphorylation. No nuclear entry PER1, CRY1 nor CKSN1E; when associated with A-661.">
    <original>S</original>
    <variation>A</variation>
    <location>
        <position position="663"/>
    </location>
</feature>
<feature type="mutagenesis site" description="No effect on nuclear import." evidence="10">
    <original>HCR</original>
    <variation>ACA</variation>
    <location>
        <begin position="831"/>
        <end position="833"/>
    </location>
</feature>
<feature type="mutagenesis site" description="Abolishes nuclear accumulation." evidence="10">
    <original>KAKR</original>
    <variation>AAKA</variation>
    <location>
        <begin position="835"/>
        <end position="838"/>
    </location>
</feature>
<feature type="mutagenesis site" description="No effect on nuclear import.">
    <original>TSVSPATFPSPLVT</original>
    <variation>AAVAPAAFPAPLVA</variation>
    <location>
        <begin position="902"/>
        <end position="915"/>
    </location>
</feature>
<feature type="sequence conflict" description="In Ref. 1; AAC53355, 2; BAA22634 and 3; BAA94086." evidence="36" ref="1 2 3">
    <original>T</original>
    <variation>M</variation>
    <location>
        <position position="1199"/>
    </location>
</feature>
<feature type="strand" evidence="38">
    <location>
        <begin position="198"/>
        <end position="200"/>
    </location>
</feature>
<feature type="helix" evidence="38">
    <location>
        <begin position="202"/>
        <end position="212"/>
    </location>
</feature>
<feature type="strand" evidence="38">
    <location>
        <begin position="217"/>
        <end position="225"/>
    </location>
</feature>
<feature type="turn" evidence="38">
    <location>
        <begin position="226"/>
        <end position="228"/>
    </location>
</feature>
<feature type="strand" evidence="38">
    <location>
        <begin position="230"/>
        <end position="234"/>
    </location>
</feature>
<feature type="helix" evidence="38">
    <location>
        <begin position="237"/>
        <end position="242"/>
    </location>
</feature>
<feature type="turn" evidence="38">
    <location>
        <begin position="247"/>
        <end position="251"/>
    </location>
</feature>
<feature type="helix" evidence="38">
    <location>
        <begin position="254"/>
        <end position="257"/>
    </location>
</feature>
<feature type="helix" evidence="38">
    <location>
        <begin position="260"/>
        <end position="269"/>
    </location>
</feature>
<feature type="turn" evidence="38">
    <location>
        <begin position="272"/>
        <end position="274"/>
    </location>
</feature>
<feature type="strand" evidence="38">
    <location>
        <begin position="297"/>
        <end position="301"/>
    </location>
</feature>
<feature type="strand" evidence="38">
    <location>
        <begin position="314"/>
        <end position="325"/>
    </location>
</feature>
<feature type="strand" evidence="38">
    <location>
        <begin position="334"/>
        <end position="343"/>
    </location>
</feature>
<feature type="strand" evidence="38">
    <location>
        <begin position="347"/>
        <end position="351"/>
    </location>
</feature>
<feature type="helix" evidence="38">
    <location>
        <begin position="355"/>
        <end position="357"/>
    </location>
</feature>
<feature type="strand" evidence="38">
    <location>
        <begin position="359"/>
        <end position="364"/>
    </location>
</feature>
<feature type="strand" evidence="38">
    <location>
        <begin position="369"/>
        <end position="373"/>
    </location>
</feature>
<feature type="helix" evidence="38">
    <location>
        <begin position="377"/>
        <end position="381"/>
    </location>
</feature>
<feature type="helix" evidence="38">
    <location>
        <begin position="385"/>
        <end position="388"/>
    </location>
</feature>
<feature type="helix" evidence="38">
    <location>
        <begin position="393"/>
        <end position="396"/>
    </location>
</feature>
<feature type="helix" evidence="38">
    <location>
        <begin position="399"/>
        <end position="401"/>
    </location>
</feature>
<feature type="helix" evidence="38">
    <location>
        <begin position="402"/>
        <end position="412"/>
    </location>
</feature>
<feature type="strand" evidence="38">
    <location>
        <begin position="415"/>
        <end position="417"/>
    </location>
</feature>
<feature type="strand" evidence="38">
    <location>
        <begin position="425"/>
        <end position="428"/>
    </location>
</feature>
<feature type="strand" evidence="38">
    <location>
        <begin position="430"/>
        <end position="432"/>
    </location>
</feature>
<feature type="strand" evidence="38">
    <location>
        <begin position="434"/>
        <end position="438"/>
    </location>
</feature>
<feature type="strand" evidence="38">
    <location>
        <begin position="440"/>
        <end position="445"/>
    </location>
</feature>
<feature type="turn" evidence="38">
    <location>
        <begin position="447"/>
        <end position="449"/>
    </location>
</feature>
<feature type="strand" evidence="38">
    <location>
        <begin position="451"/>
        <end position="463"/>
    </location>
</feature>
<feature type="helix" evidence="38">
    <location>
        <begin position="485"/>
        <end position="498"/>
    </location>
</feature>
<protein>
    <recommendedName>
        <fullName>Period circadian protein homolog 1</fullName>
        <shortName>mPER1</shortName>
    </recommendedName>
    <alternativeName>
        <fullName>Circadian clock protein PERIOD 1</fullName>
    </alternativeName>
    <alternativeName>
        <fullName>Circadian pacemaker protein Rigui</fullName>
    </alternativeName>
</protein>